<keyword id="KW-0010">Activator</keyword>
<keyword id="KW-0963">Cytoplasm</keyword>
<keyword id="KW-0238">DNA-binding</keyword>
<keyword id="KW-0276">Fatty acid metabolism</keyword>
<keyword id="KW-0443">Lipid metabolism</keyword>
<keyword id="KW-0678">Repressor</keyword>
<keyword id="KW-0804">Transcription</keyword>
<keyword id="KW-0805">Transcription regulation</keyword>
<comment type="function">
    <text evidence="1">Multifunctional regulator of fatty acid metabolism.</text>
</comment>
<comment type="subunit">
    <text evidence="1">Homodimer.</text>
</comment>
<comment type="subcellular location">
    <subcellularLocation>
        <location evidence="1">Cytoplasm</location>
    </subcellularLocation>
</comment>
<sequence length="279" mass="31998">MVIKAKSPAGFAEKYIIESIWNGRFPPGSILPAERELSELIGVTRTTLREVLQRLARDGWLTIQHGKPTKVNQFMETSGLHILDTLMTLDAENATSIVEDLLAARTNISPIFMRYAFKLNKESAERIMINVIESCEALVNAPSWDAFIAASPYAEKIQQHVKEDSEKDELKRQEILIAKTFNFYDYMLFQRLAFHSGNQIYGLIFNGLKKLYDRVGSYYFSNPQARELAMEFYRQLLAVCQSGEREHLPQVIRQYGIASGHIWNQMKMTLPSNFTEDDC</sequence>
<reference key="1">
    <citation type="journal article" date="2008" name="PLoS ONE">
        <title>A recalibrated molecular clock and independent origins for the cholera pandemic clones.</title>
        <authorList>
            <person name="Feng L."/>
            <person name="Reeves P.R."/>
            <person name="Lan R."/>
            <person name="Ren Y."/>
            <person name="Gao C."/>
            <person name="Zhou Z."/>
            <person name="Ren Y."/>
            <person name="Cheng J."/>
            <person name="Wang W."/>
            <person name="Wang J."/>
            <person name="Qian W."/>
            <person name="Li D."/>
            <person name="Wang L."/>
        </authorList>
    </citation>
    <scope>NUCLEOTIDE SEQUENCE [LARGE SCALE GENOMIC DNA]</scope>
    <source>
        <strain>M66-2</strain>
    </source>
</reference>
<evidence type="ECO:0000255" key="1">
    <source>
        <dbReference type="HAMAP-Rule" id="MF_00696"/>
    </source>
</evidence>
<protein>
    <recommendedName>
        <fullName evidence="1">Fatty acid metabolism regulator protein</fullName>
    </recommendedName>
</protein>
<organism>
    <name type="scientific">Vibrio cholerae serotype O1 (strain M66-2)</name>
    <dbReference type="NCBI Taxonomy" id="579112"/>
    <lineage>
        <taxon>Bacteria</taxon>
        <taxon>Pseudomonadati</taxon>
        <taxon>Pseudomonadota</taxon>
        <taxon>Gammaproteobacteria</taxon>
        <taxon>Vibrionales</taxon>
        <taxon>Vibrionaceae</taxon>
        <taxon>Vibrio</taxon>
    </lineage>
</organism>
<dbReference type="EMBL" id="CP001233">
    <property type="protein sequence ID" value="ACP06130.1"/>
    <property type="molecule type" value="Genomic_DNA"/>
</dbReference>
<dbReference type="RefSeq" id="WP_000234820.1">
    <property type="nucleotide sequence ID" value="NC_012578.1"/>
</dbReference>
<dbReference type="SMR" id="C3LNK4"/>
<dbReference type="GeneID" id="69719471"/>
<dbReference type="KEGG" id="vcm:VCM66_1824"/>
<dbReference type="HOGENOM" id="CLU_017584_9_4_6"/>
<dbReference type="Proteomes" id="UP000001217">
    <property type="component" value="Chromosome I"/>
</dbReference>
<dbReference type="GO" id="GO:0005737">
    <property type="term" value="C:cytoplasm"/>
    <property type="evidence" value="ECO:0007669"/>
    <property type="project" value="UniProtKB-SubCell"/>
</dbReference>
<dbReference type="GO" id="GO:0003677">
    <property type="term" value="F:DNA binding"/>
    <property type="evidence" value="ECO:0007669"/>
    <property type="project" value="UniProtKB-KW"/>
</dbReference>
<dbReference type="GO" id="GO:0003700">
    <property type="term" value="F:DNA-binding transcription factor activity"/>
    <property type="evidence" value="ECO:0007669"/>
    <property type="project" value="UniProtKB-UniRule"/>
</dbReference>
<dbReference type="GO" id="GO:0000062">
    <property type="term" value="F:fatty-acyl-CoA binding"/>
    <property type="evidence" value="ECO:0007669"/>
    <property type="project" value="InterPro"/>
</dbReference>
<dbReference type="GO" id="GO:0006631">
    <property type="term" value="P:fatty acid metabolic process"/>
    <property type="evidence" value="ECO:0007669"/>
    <property type="project" value="UniProtKB-KW"/>
</dbReference>
<dbReference type="GO" id="GO:0019217">
    <property type="term" value="P:regulation of fatty acid metabolic process"/>
    <property type="evidence" value="ECO:0007669"/>
    <property type="project" value="UniProtKB-UniRule"/>
</dbReference>
<dbReference type="CDD" id="cd07377">
    <property type="entry name" value="WHTH_GntR"/>
    <property type="match status" value="1"/>
</dbReference>
<dbReference type="Gene3D" id="1.20.120.530">
    <property type="entry name" value="GntR ligand-binding domain-like"/>
    <property type="match status" value="1"/>
</dbReference>
<dbReference type="Gene3D" id="1.10.10.10">
    <property type="entry name" value="Winged helix-like DNA-binding domain superfamily/Winged helix DNA-binding domain"/>
    <property type="match status" value="1"/>
</dbReference>
<dbReference type="HAMAP" id="MF_00696">
    <property type="entry name" value="HTH_FadR"/>
    <property type="match status" value="1"/>
</dbReference>
<dbReference type="InterPro" id="IPR014178">
    <property type="entry name" value="FA-response_TF_FadR"/>
</dbReference>
<dbReference type="InterPro" id="IPR028374">
    <property type="entry name" value="FadR_C"/>
</dbReference>
<dbReference type="InterPro" id="IPR008920">
    <property type="entry name" value="TF_FadR/GntR_C"/>
</dbReference>
<dbReference type="InterPro" id="IPR000524">
    <property type="entry name" value="Tscrpt_reg_HTH_GntR"/>
</dbReference>
<dbReference type="InterPro" id="IPR036388">
    <property type="entry name" value="WH-like_DNA-bd_sf"/>
</dbReference>
<dbReference type="InterPro" id="IPR036390">
    <property type="entry name" value="WH_DNA-bd_sf"/>
</dbReference>
<dbReference type="NCBIfam" id="TIGR02812">
    <property type="entry name" value="fadR_gamma"/>
    <property type="match status" value="1"/>
</dbReference>
<dbReference type="NCBIfam" id="NF003444">
    <property type="entry name" value="PRK04984.1"/>
    <property type="match status" value="1"/>
</dbReference>
<dbReference type="PANTHER" id="PTHR43537:SF52">
    <property type="entry name" value="FATTY ACID METABOLISM REGULATOR PROTEIN"/>
    <property type="match status" value="1"/>
</dbReference>
<dbReference type="PANTHER" id="PTHR43537">
    <property type="entry name" value="TRANSCRIPTIONAL REGULATOR, GNTR FAMILY"/>
    <property type="match status" value="1"/>
</dbReference>
<dbReference type="Pfam" id="PF07840">
    <property type="entry name" value="FadR_C"/>
    <property type="match status" value="1"/>
</dbReference>
<dbReference type="Pfam" id="PF00392">
    <property type="entry name" value="GntR"/>
    <property type="match status" value="1"/>
</dbReference>
<dbReference type="PRINTS" id="PR00035">
    <property type="entry name" value="HTHGNTR"/>
</dbReference>
<dbReference type="SMART" id="SM00345">
    <property type="entry name" value="HTH_GNTR"/>
    <property type="match status" value="1"/>
</dbReference>
<dbReference type="SUPFAM" id="SSF48008">
    <property type="entry name" value="GntR ligand-binding domain-like"/>
    <property type="match status" value="1"/>
</dbReference>
<dbReference type="SUPFAM" id="SSF46785">
    <property type="entry name" value="Winged helix' DNA-binding domain"/>
    <property type="match status" value="1"/>
</dbReference>
<dbReference type="PROSITE" id="PS50949">
    <property type="entry name" value="HTH_GNTR"/>
    <property type="match status" value="1"/>
</dbReference>
<proteinExistence type="inferred from homology"/>
<gene>
    <name evidence="1" type="primary">fadR</name>
    <name type="ordered locus">VCM66_1824</name>
</gene>
<feature type="chain" id="PRO_1000201047" description="Fatty acid metabolism regulator protein">
    <location>
        <begin position="1"/>
        <end position="279"/>
    </location>
</feature>
<feature type="domain" description="HTH gntR-type" evidence="1">
    <location>
        <begin position="6"/>
        <end position="74"/>
    </location>
</feature>
<feature type="DNA-binding region" description="H-T-H motif" evidence="1">
    <location>
        <begin position="34"/>
        <end position="53"/>
    </location>
</feature>
<name>FADR_VIBCM</name>
<accession>C3LNK4</accession>